<reference key="1">
    <citation type="submission" date="2009-07" db="EMBL/GenBank/DDBJ databases">
        <title>Complete sequence of Pectobacterium carotovorum subsp. carotovorum PC1.</title>
        <authorList>
            <consortium name="US DOE Joint Genome Institute"/>
            <person name="Lucas S."/>
            <person name="Copeland A."/>
            <person name="Lapidus A."/>
            <person name="Glavina del Rio T."/>
            <person name="Tice H."/>
            <person name="Bruce D."/>
            <person name="Goodwin L."/>
            <person name="Pitluck S."/>
            <person name="Munk A.C."/>
            <person name="Brettin T."/>
            <person name="Detter J.C."/>
            <person name="Han C."/>
            <person name="Tapia R."/>
            <person name="Larimer F."/>
            <person name="Land M."/>
            <person name="Hauser L."/>
            <person name="Kyrpides N."/>
            <person name="Mikhailova N."/>
            <person name="Balakrishnan V."/>
            <person name="Glasner J."/>
            <person name="Perna N.T."/>
        </authorList>
    </citation>
    <scope>NUCLEOTIDE SEQUENCE [LARGE SCALE GENOMIC DNA]</scope>
    <source>
        <strain>PC1</strain>
    </source>
</reference>
<sequence>MASPHRLLKDYQQLLSLSQKILHLAVNGQWDTLVEQEIVYVQSVEGLVNTPIPDEIDSVMRLHLRQILQEVMDNEAKVKQLLQKRMDELSSLMGQSLKQKSINTTYNEFAGQRMLPGDALPDETRS</sequence>
<accession>C6D977</accession>
<dbReference type="EMBL" id="CP001657">
    <property type="protein sequence ID" value="ACT13604.1"/>
    <property type="molecule type" value="Genomic_DNA"/>
</dbReference>
<dbReference type="RefSeq" id="WP_015840778.1">
    <property type="nucleotide sequence ID" value="NC_012917.1"/>
</dbReference>
<dbReference type="SMR" id="C6D977"/>
<dbReference type="STRING" id="561230.PC1_2573"/>
<dbReference type="KEGG" id="pct:PC1_2573"/>
<dbReference type="eggNOG" id="ENOG5032ZV7">
    <property type="taxonomic scope" value="Bacteria"/>
</dbReference>
<dbReference type="HOGENOM" id="CLU_155793_1_0_6"/>
<dbReference type="OrthoDB" id="6494117at2"/>
<dbReference type="Proteomes" id="UP000002736">
    <property type="component" value="Chromosome"/>
</dbReference>
<dbReference type="GO" id="GO:0005829">
    <property type="term" value="C:cytosol"/>
    <property type="evidence" value="ECO:0007669"/>
    <property type="project" value="UniProtKB-SubCell"/>
</dbReference>
<dbReference type="GO" id="GO:0044781">
    <property type="term" value="P:bacterial-type flagellum organization"/>
    <property type="evidence" value="ECO:0007669"/>
    <property type="project" value="UniProtKB-KW"/>
</dbReference>
<dbReference type="GO" id="GO:1902209">
    <property type="term" value="P:negative regulation of bacterial-type flagellum assembly"/>
    <property type="evidence" value="ECO:0007669"/>
    <property type="project" value="UniProtKB-UniRule"/>
</dbReference>
<dbReference type="GO" id="GO:0006457">
    <property type="term" value="P:protein folding"/>
    <property type="evidence" value="ECO:0007669"/>
    <property type="project" value="UniProtKB-UniRule"/>
</dbReference>
<dbReference type="Gene3D" id="1.20.58.380">
    <property type="entry name" value="Flagellar protein flit"/>
    <property type="match status" value="1"/>
</dbReference>
<dbReference type="HAMAP" id="MF_01180">
    <property type="entry name" value="FliT"/>
    <property type="match status" value="1"/>
</dbReference>
<dbReference type="InterPro" id="IPR008622">
    <property type="entry name" value="FliT"/>
</dbReference>
<dbReference type="NCBIfam" id="NF007836">
    <property type="entry name" value="PRK10548.1"/>
    <property type="match status" value="1"/>
</dbReference>
<dbReference type="Pfam" id="PF05400">
    <property type="entry name" value="FliT"/>
    <property type="match status" value="1"/>
</dbReference>
<keyword id="KW-1005">Bacterial flagellum biogenesis</keyword>
<keyword id="KW-0143">Chaperone</keyword>
<keyword id="KW-0963">Cytoplasm</keyword>
<keyword id="KW-0678">Repressor</keyword>
<keyword id="KW-0804">Transcription</keyword>
<keyword id="KW-0805">Transcription regulation</keyword>
<comment type="function">
    <text evidence="1">Dual-function protein that regulates the transcription of class 2 flagellar operons and that also acts as an export chaperone for the filament-capping protein FliD. As a transcriptional regulator, acts as an anti-FlhDC factor; it directly binds FlhC, thus inhibiting the binding of the FlhC/FlhD complex to class 2 promoters, resulting in decreased expression of class 2 flagellar operons. As a chaperone, effects FliD transition to the membrane by preventing its premature polymerization, and by directing it to the export apparatus.</text>
</comment>
<comment type="subunit">
    <text evidence="1">Homodimer. Interacts with FliD and FlhC.</text>
</comment>
<comment type="subcellular location">
    <subcellularLocation>
        <location evidence="1">Cytoplasm</location>
        <location evidence="1">Cytosol</location>
    </subcellularLocation>
</comment>
<comment type="similarity">
    <text evidence="1">Belongs to the FliT family.</text>
</comment>
<proteinExistence type="inferred from homology"/>
<name>FLIT_PECCP</name>
<evidence type="ECO:0000255" key="1">
    <source>
        <dbReference type="HAMAP-Rule" id="MF_01180"/>
    </source>
</evidence>
<protein>
    <recommendedName>
        <fullName evidence="1">Flagellar protein FliT</fullName>
    </recommendedName>
</protein>
<organism>
    <name type="scientific">Pectobacterium carotovorum subsp. carotovorum (strain PC1)</name>
    <dbReference type="NCBI Taxonomy" id="561230"/>
    <lineage>
        <taxon>Bacteria</taxon>
        <taxon>Pseudomonadati</taxon>
        <taxon>Pseudomonadota</taxon>
        <taxon>Gammaproteobacteria</taxon>
        <taxon>Enterobacterales</taxon>
        <taxon>Pectobacteriaceae</taxon>
        <taxon>Pectobacterium</taxon>
    </lineage>
</organism>
<feature type="chain" id="PRO_1000213757" description="Flagellar protein FliT">
    <location>
        <begin position="1"/>
        <end position="126"/>
    </location>
</feature>
<feature type="region of interest" description="Required for homodimerization" evidence="1">
    <location>
        <begin position="1"/>
        <end position="50"/>
    </location>
</feature>
<feature type="region of interest" description="FliD binding" evidence="1">
    <location>
        <begin position="60"/>
        <end position="98"/>
    </location>
</feature>
<gene>
    <name evidence="1" type="primary">fliT</name>
    <name type="ordered locus">PC1_2573</name>
</gene>